<evidence type="ECO:0000255" key="1">
    <source>
        <dbReference type="HAMAP-Rule" id="MF_01326"/>
    </source>
</evidence>
<evidence type="ECO:0000256" key="2">
    <source>
        <dbReference type="SAM" id="MobiDB-lite"/>
    </source>
</evidence>
<evidence type="ECO:0000305" key="3"/>
<dbReference type="EMBL" id="CP001217">
    <property type="protein sequence ID" value="ACJ08424.1"/>
    <property type="molecule type" value="Genomic_DNA"/>
</dbReference>
<dbReference type="SMR" id="B6JNE6"/>
<dbReference type="KEGG" id="hpp:HPP12_1272"/>
<dbReference type="HOGENOM" id="CLU_093315_3_0_7"/>
<dbReference type="Proteomes" id="UP000008198">
    <property type="component" value="Chromosome"/>
</dbReference>
<dbReference type="GO" id="GO:1990904">
    <property type="term" value="C:ribonucleoprotein complex"/>
    <property type="evidence" value="ECO:0007669"/>
    <property type="project" value="UniProtKB-KW"/>
</dbReference>
<dbReference type="GO" id="GO:0005840">
    <property type="term" value="C:ribosome"/>
    <property type="evidence" value="ECO:0007669"/>
    <property type="project" value="UniProtKB-KW"/>
</dbReference>
<dbReference type="GO" id="GO:0019843">
    <property type="term" value="F:rRNA binding"/>
    <property type="evidence" value="ECO:0007669"/>
    <property type="project" value="UniProtKB-UniRule"/>
</dbReference>
<dbReference type="GO" id="GO:0003735">
    <property type="term" value="F:structural constituent of ribosome"/>
    <property type="evidence" value="ECO:0007669"/>
    <property type="project" value="InterPro"/>
</dbReference>
<dbReference type="GO" id="GO:0006412">
    <property type="term" value="P:translation"/>
    <property type="evidence" value="ECO:0007669"/>
    <property type="project" value="UniProtKB-UniRule"/>
</dbReference>
<dbReference type="CDD" id="cd06089">
    <property type="entry name" value="KOW_RPL26"/>
    <property type="match status" value="1"/>
</dbReference>
<dbReference type="FunFam" id="2.30.30.30:FF:000023">
    <property type="entry name" value="50S ribosomal protein L24"/>
    <property type="match status" value="1"/>
</dbReference>
<dbReference type="Gene3D" id="2.30.30.30">
    <property type="match status" value="1"/>
</dbReference>
<dbReference type="HAMAP" id="MF_01326_B">
    <property type="entry name" value="Ribosomal_uL24_B"/>
    <property type="match status" value="1"/>
</dbReference>
<dbReference type="InterPro" id="IPR005824">
    <property type="entry name" value="KOW"/>
</dbReference>
<dbReference type="InterPro" id="IPR014722">
    <property type="entry name" value="Rib_uL2_dom2"/>
</dbReference>
<dbReference type="InterPro" id="IPR003256">
    <property type="entry name" value="Ribosomal_uL24"/>
</dbReference>
<dbReference type="InterPro" id="IPR005825">
    <property type="entry name" value="Ribosomal_uL24_CS"/>
</dbReference>
<dbReference type="InterPro" id="IPR041988">
    <property type="entry name" value="Ribosomal_uL24_KOW"/>
</dbReference>
<dbReference type="InterPro" id="IPR008991">
    <property type="entry name" value="Translation_prot_SH3-like_sf"/>
</dbReference>
<dbReference type="NCBIfam" id="TIGR01079">
    <property type="entry name" value="rplX_bact"/>
    <property type="match status" value="1"/>
</dbReference>
<dbReference type="PANTHER" id="PTHR12903">
    <property type="entry name" value="MITOCHONDRIAL RIBOSOMAL PROTEIN L24"/>
    <property type="match status" value="1"/>
</dbReference>
<dbReference type="Pfam" id="PF00467">
    <property type="entry name" value="KOW"/>
    <property type="match status" value="1"/>
</dbReference>
<dbReference type="Pfam" id="PF17136">
    <property type="entry name" value="ribosomal_L24"/>
    <property type="match status" value="1"/>
</dbReference>
<dbReference type="SMART" id="SM00739">
    <property type="entry name" value="KOW"/>
    <property type="match status" value="1"/>
</dbReference>
<dbReference type="SUPFAM" id="SSF50104">
    <property type="entry name" value="Translation proteins SH3-like domain"/>
    <property type="match status" value="1"/>
</dbReference>
<dbReference type="PROSITE" id="PS01108">
    <property type="entry name" value="RIBOSOMAL_L24"/>
    <property type="match status" value="1"/>
</dbReference>
<sequence length="73" mass="7924">MKSEIKKNDMVKVIAGDDKGKVAKVLAVLPKTSQVVVEGCKVVKKAIKPTDDNPKGGFIHKEKPMHISNVKKA</sequence>
<feature type="chain" id="PRO_1000142003" description="Large ribosomal subunit protein uL24">
    <location>
        <begin position="1"/>
        <end position="73"/>
    </location>
</feature>
<feature type="region of interest" description="Disordered" evidence="2">
    <location>
        <begin position="51"/>
        <end position="73"/>
    </location>
</feature>
<feature type="compositionally biased region" description="Basic and acidic residues" evidence="2">
    <location>
        <begin position="51"/>
        <end position="65"/>
    </location>
</feature>
<gene>
    <name evidence="1" type="primary">rplX</name>
    <name type="ordered locus">HPP12_1272</name>
</gene>
<reference key="1">
    <citation type="submission" date="2008-10" db="EMBL/GenBank/DDBJ databases">
        <title>The complete genome sequence of Helicobacter pylori strain P12.</title>
        <authorList>
            <person name="Fischer W."/>
            <person name="Windhager L."/>
            <person name="Karnholz A."/>
            <person name="Zeiller M."/>
            <person name="Zimmer R."/>
            <person name="Haas R."/>
        </authorList>
    </citation>
    <scope>NUCLEOTIDE SEQUENCE [LARGE SCALE GENOMIC DNA]</scope>
    <source>
        <strain>P12</strain>
    </source>
</reference>
<comment type="function">
    <text evidence="1">One of two assembly initiator proteins, it binds directly to the 5'-end of the 23S rRNA, where it nucleates assembly of the 50S subunit.</text>
</comment>
<comment type="function">
    <text evidence="1">One of the proteins that surrounds the polypeptide exit tunnel on the outside of the subunit.</text>
</comment>
<comment type="subunit">
    <text evidence="1">Part of the 50S ribosomal subunit.</text>
</comment>
<comment type="similarity">
    <text evidence="1">Belongs to the universal ribosomal protein uL24 family.</text>
</comment>
<accession>B6JNE6</accession>
<proteinExistence type="inferred from homology"/>
<protein>
    <recommendedName>
        <fullName evidence="1">Large ribosomal subunit protein uL24</fullName>
    </recommendedName>
    <alternativeName>
        <fullName evidence="3">50S ribosomal protein L24</fullName>
    </alternativeName>
</protein>
<keyword id="KW-0687">Ribonucleoprotein</keyword>
<keyword id="KW-0689">Ribosomal protein</keyword>
<keyword id="KW-0694">RNA-binding</keyword>
<keyword id="KW-0699">rRNA-binding</keyword>
<name>RL24_HELP2</name>
<organism>
    <name type="scientific">Helicobacter pylori (strain P12)</name>
    <dbReference type="NCBI Taxonomy" id="570508"/>
    <lineage>
        <taxon>Bacteria</taxon>
        <taxon>Pseudomonadati</taxon>
        <taxon>Campylobacterota</taxon>
        <taxon>Epsilonproteobacteria</taxon>
        <taxon>Campylobacterales</taxon>
        <taxon>Helicobacteraceae</taxon>
        <taxon>Helicobacter</taxon>
    </lineage>
</organism>